<dbReference type="EMBL" id="AM777385">
    <property type="protein sequence ID" value="CAO85974.1"/>
    <property type="molecule type" value="Genomic_DNA"/>
</dbReference>
<dbReference type="RefSeq" id="YP_001531281.1">
    <property type="nucleotide sequence ID" value="NC_009950.1"/>
</dbReference>
<dbReference type="SMR" id="A8Y9G8"/>
<dbReference type="GeneID" id="5696617"/>
<dbReference type="KEGG" id="lper:5696617"/>
<dbReference type="GO" id="GO:0009507">
    <property type="term" value="C:chloroplast"/>
    <property type="evidence" value="ECO:0007669"/>
    <property type="project" value="UniProtKB-SubCell"/>
</dbReference>
<dbReference type="GO" id="GO:0015935">
    <property type="term" value="C:small ribosomal subunit"/>
    <property type="evidence" value="ECO:0007669"/>
    <property type="project" value="TreeGrafter"/>
</dbReference>
<dbReference type="GO" id="GO:0019843">
    <property type="term" value="F:rRNA binding"/>
    <property type="evidence" value="ECO:0007669"/>
    <property type="project" value="UniProtKB-UniRule"/>
</dbReference>
<dbReference type="GO" id="GO:0003735">
    <property type="term" value="F:structural constituent of ribosome"/>
    <property type="evidence" value="ECO:0007669"/>
    <property type="project" value="InterPro"/>
</dbReference>
<dbReference type="GO" id="GO:0006412">
    <property type="term" value="P:translation"/>
    <property type="evidence" value="ECO:0007669"/>
    <property type="project" value="UniProtKB-UniRule"/>
</dbReference>
<dbReference type="FunFam" id="1.10.287.1480:FF:000001">
    <property type="entry name" value="30S ribosomal protein S14"/>
    <property type="match status" value="1"/>
</dbReference>
<dbReference type="Gene3D" id="1.10.287.1480">
    <property type="match status" value="1"/>
</dbReference>
<dbReference type="HAMAP" id="MF_00537">
    <property type="entry name" value="Ribosomal_uS14_1"/>
    <property type="match status" value="1"/>
</dbReference>
<dbReference type="InterPro" id="IPR001209">
    <property type="entry name" value="Ribosomal_uS14"/>
</dbReference>
<dbReference type="InterPro" id="IPR023036">
    <property type="entry name" value="Ribosomal_uS14_bac/plastid"/>
</dbReference>
<dbReference type="InterPro" id="IPR018271">
    <property type="entry name" value="Ribosomal_uS14_CS"/>
</dbReference>
<dbReference type="NCBIfam" id="NF006477">
    <property type="entry name" value="PRK08881.1"/>
    <property type="match status" value="1"/>
</dbReference>
<dbReference type="PANTHER" id="PTHR19836">
    <property type="entry name" value="30S RIBOSOMAL PROTEIN S14"/>
    <property type="match status" value="1"/>
</dbReference>
<dbReference type="PANTHER" id="PTHR19836:SF19">
    <property type="entry name" value="SMALL RIBOSOMAL SUBUNIT PROTEIN US14M"/>
    <property type="match status" value="1"/>
</dbReference>
<dbReference type="Pfam" id="PF00253">
    <property type="entry name" value="Ribosomal_S14"/>
    <property type="match status" value="1"/>
</dbReference>
<dbReference type="SUPFAM" id="SSF57716">
    <property type="entry name" value="Glucocorticoid receptor-like (DNA-binding domain)"/>
    <property type="match status" value="1"/>
</dbReference>
<dbReference type="PROSITE" id="PS00527">
    <property type="entry name" value="RIBOSOMAL_S14"/>
    <property type="match status" value="1"/>
</dbReference>
<name>RR14_LOLPR</name>
<geneLocation type="chloroplast"/>
<accession>A8Y9G8</accession>
<sequence length="103" mass="12182">MAKKSLIQREKKRQKLEQKYHLIRQSLKKKIRSKVSSLSLSEKTKMREKLQSLPRNSAPTRLHRRCFLTGRPRANYRDFGLSGHVLREMVYECLLPGATRSSW</sequence>
<organism>
    <name type="scientific">Lolium perenne</name>
    <name type="common">Perennial ryegrass</name>
    <dbReference type="NCBI Taxonomy" id="4522"/>
    <lineage>
        <taxon>Eukaryota</taxon>
        <taxon>Viridiplantae</taxon>
        <taxon>Streptophyta</taxon>
        <taxon>Embryophyta</taxon>
        <taxon>Tracheophyta</taxon>
        <taxon>Spermatophyta</taxon>
        <taxon>Magnoliopsida</taxon>
        <taxon>Liliopsida</taxon>
        <taxon>Poales</taxon>
        <taxon>Poaceae</taxon>
        <taxon>BOP clade</taxon>
        <taxon>Pooideae</taxon>
        <taxon>Poodae</taxon>
        <taxon>Poeae</taxon>
        <taxon>Poeae Chloroplast Group 2 (Poeae type)</taxon>
        <taxon>Loliodinae</taxon>
        <taxon>Loliinae</taxon>
        <taxon>Lolium</taxon>
    </lineage>
</organism>
<evidence type="ECO:0000255" key="1">
    <source>
        <dbReference type="HAMAP-Rule" id="MF_00537"/>
    </source>
</evidence>
<evidence type="ECO:0000305" key="2"/>
<protein>
    <recommendedName>
        <fullName evidence="1">Small ribosomal subunit protein uS14c</fullName>
    </recommendedName>
    <alternativeName>
        <fullName evidence="2">30S ribosomal protein S14, chloroplastic</fullName>
    </alternativeName>
</protein>
<proteinExistence type="inferred from homology"/>
<feature type="chain" id="PRO_0000354425" description="Small ribosomal subunit protein uS14c">
    <location>
        <begin position="1"/>
        <end position="103"/>
    </location>
</feature>
<reference key="1">
    <citation type="journal article" date="2008" name="PLoS ONE">
        <title>An optimized chloroplast DNA extraction protocol for grasses (Poaceae) proves suitable for whole plastid genome sequencing and SNP detection.</title>
        <authorList>
            <person name="Diekmann K."/>
            <person name="Hodkinson T.R."/>
            <person name="Fricke E."/>
            <person name="Barth S."/>
        </authorList>
    </citation>
    <scope>NUCLEOTIDE SEQUENCE [LARGE SCALE GENOMIC DNA]</scope>
    <source>
        <strain>cv. Cashel</strain>
    </source>
</reference>
<comment type="function">
    <text evidence="1">Binds 16S rRNA, required for the assembly of 30S particles.</text>
</comment>
<comment type="subunit">
    <text evidence="1">Part of the 30S ribosomal subunit.</text>
</comment>
<comment type="subcellular location">
    <subcellularLocation>
        <location>Plastid</location>
        <location>Chloroplast</location>
    </subcellularLocation>
</comment>
<comment type="similarity">
    <text evidence="1">Belongs to the universal ribosomal protein uS14 family.</text>
</comment>
<keyword id="KW-0150">Chloroplast</keyword>
<keyword id="KW-0934">Plastid</keyword>
<keyword id="KW-0687">Ribonucleoprotein</keyword>
<keyword id="KW-0689">Ribosomal protein</keyword>
<keyword id="KW-0694">RNA-binding</keyword>
<keyword id="KW-0699">rRNA-binding</keyword>
<gene>
    <name evidence="1" type="primary">rps14</name>
    <name type="ordered locus">LopeCp032</name>
</gene>